<gene>
    <name evidence="8" type="primary">TRAV3</name>
</gene>
<accession>A0A0B4J244</accession>
<sequence>MASAPISMLAMLFTLSGLRAQSVAQPEDQVNVAEGNPLTVKCTYSVSGNPYLFWYVQYPNRGLQFLLKYITGDNLVKGSYGFEAEFNKSQTSFHLKKPSALVSDSALYFCAVRD</sequence>
<organism>
    <name type="scientific">Homo sapiens</name>
    <name type="common">Human</name>
    <dbReference type="NCBI Taxonomy" id="9606"/>
    <lineage>
        <taxon>Eukaryota</taxon>
        <taxon>Metazoa</taxon>
        <taxon>Chordata</taxon>
        <taxon>Craniata</taxon>
        <taxon>Vertebrata</taxon>
        <taxon>Euteleostomi</taxon>
        <taxon>Mammalia</taxon>
        <taxon>Eutheria</taxon>
        <taxon>Euarchontoglires</taxon>
        <taxon>Primates</taxon>
        <taxon>Haplorrhini</taxon>
        <taxon>Catarrhini</taxon>
        <taxon>Hominidae</taxon>
        <taxon>Homo</taxon>
    </lineage>
</organism>
<comment type="function">
    <text evidence="3 5 6 7">V region of the variable domain of T cell receptor (TR) alpha chain that participates in the antigen recognition (PubMed:24600447). Alpha-beta T cell receptors are antigen specific receptors which are essential to the immune response and are present on the cell surface of T lymphocytes. Recognize peptide-major histocompatibility (MH) (pMH) complexes that are displayed by antigen presenting cells (APC), a prerequisite for efficient T cell adaptive immunity against pathogens (PubMed:25493333). Binding of alpha-beta TR to pMH complex initiates TR-CD3 clustering on the cell surface and intracellular activation of LCK that phosphorylates the ITAM motifs of CD3G, CD3D, CD3E and CD247 enabling the recruitment of ZAP70. In turn ZAP70 phosphorylates LAT, which recruits numerous signaling molecules to form the LAT signalosome. The LAT signalosome propagates signal branching to three major signaling pathways, the calcium, the mitogen-activated protein kinase (MAPK) kinase and the nuclear factor NF-kappa-B (NF-kB) pathways, leading to the mobilization of transcription factors that are critical for gene expression and essential for T cell growth and differentiation (PubMed:23524462). The T cell repertoire is generated in the thymus, by V-(D)-J rearrangement. This repertoire is then shaped by intrathymic selection events to generate a peripheral T cell pool of self-MH restricted, non-autoaggressive T cells. Post-thymic interaction of alpha-beta TR with the pMH complexes shapes TR structural and functional avidity (PubMed:15040585).</text>
</comment>
<comment type="subunit">
    <text evidence="4">Alpha-beta TR is a heterodimer composed of an alpha and beta chain; disulfide-linked. The alpha-beta TR is associated with the transmembrane signaling CD3 coreceptor proteins to form the TR-CD3 (TcR or TCR). The assembly of alpha-beta TR heterodimers with CD3 occurs in the endoplasmic reticulum where a single alpha-beta TR heterodimer associates with one CD3D-CD3E heterodimer, one CD3G-CD3E heterodimer and one CD247 homodimer forming a stable octameric structure. CD3D-CD3E and CD3G-CD3E heterodimers preferentially associate with TR alpha and TR beta chains, respectively. The association of the CD247 homodimer is the last step of TcR assembly in the endoplasmic reticulum and is required for transport to the cell surface.</text>
</comment>
<comment type="subcellular location">
    <subcellularLocation>
        <location evidence="4">Cell membrane</location>
    </subcellularLocation>
</comment>
<comment type="polymorphism">
    <text evidence="9">There are several alleles. The sequence shown is that of IMGT allele TRAV3*01.</text>
</comment>
<protein>
    <recommendedName>
        <fullName evidence="8">T cell receptor alpha variable 3</fullName>
    </recommendedName>
</protein>
<keyword id="KW-1064">Adaptive immunity</keyword>
<keyword id="KW-1003">Cell membrane</keyword>
<keyword id="KW-1015">Disulfide bond</keyword>
<keyword id="KW-0325">Glycoprotein</keyword>
<keyword id="KW-0391">Immunity</keyword>
<keyword id="KW-0393">Immunoglobulin domain</keyword>
<keyword id="KW-0472">Membrane</keyword>
<keyword id="KW-0675">Receptor</keyword>
<keyword id="KW-1185">Reference proteome</keyword>
<keyword id="KW-0732">Signal</keyword>
<keyword id="KW-1279">T cell receptor</keyword>
<evidence type="ECO:0000255" key="1"/>
<evidence type="ECO:0000255" key="2">
    <source>
        <dbReference type="PROSITE-ProRule" id="PRU00114"/>
    </source>
</evidence>
<evidence type="ECO:0000303" key="3">
    <source>
    </source>
</evidence>
<evidence type="ECO:0000303" key="4">
    <source>
    </source>
</evidence>
<evidence type="ECO:0000303" key="5">
    <source>
    </source>
</evidence>
<evidence type="ECO:0000303" key="6">
    <source>
    </source>
</evidence>
<evidence type="ECO:0000303" key="7">
    <source>
    </source>
</evidence>
<evidence type="ECO:0000303" key="8">
    <source ref="2"/>
</evidence>
<evidence type="ECO:0000305" key="9"/>
<feature type="signal peptide" evidence="1">
    <location>
        <begin position="1"/>
        <end position="20"/>
    </location>
</feature>
<feature type="chain" id="PRO_5002107027" description="T cell receptor alpha variable 3" evidence="1">
    <location>
        <begin position="21"/>
        <end position="114"/>
    </location>
</feature>
<feature type="domain" description="Ig-like" evidence="2">
    <location>
        <begin position="21"/>
        <end position="114" status="greater than"/>
    </location>
</feature>
<feature type="glycosylation site" description="N-linked (GlcNAc...) asparagine" evidence="1">
    <location>
        <position position="87"/>
    </location>
</feature>
<feature type="disulfide bond" evidence="2">
    <location>
        <begin position="42"/>
        <end position="110"/>
    </location>
</feature>
<feature type="non-terminal residue">
    <location>
        <position position="114"/>
    </location>
</feature>
<name>TVA3_HUMAN</name>
<reference key="1">
    <citation type="journal article" date="2003" name="Nature">
        <title>The DNA sequence and analysis of human chromosome 14.</title>
        <authorList>
            <person name="Heilig R."/>
            <person name="Eckenberg R."/>
            <person name="Petit J.-L."/>
            <person name="Fonknechten N."/>
            <person name="Da Silva C."/>
            <person name="Cattolico L."/>
            <person name="Levy M."/>
            <person name="Barbe V."/>
            <person name="De Berardinis V."/>
            <person name="Ureta-Vidal A."/>
            <person name="Pelletier E."/>
            <person name="Vico V."/>
            <person name="Anthouard V."/>
            <person name="Rowen L."/>
            <person name="Madan A."/>
            <person name="Qin S."/>
            <person name="Sun H."/>
            <person name="Du H."/>
            <person name="Pepin K."/>
            <person name="Artiguenave F."/>
            <person name="Robert C."/>
            <person name="Cruaud C."/>
            <person name="Bruels T."/>
            <person name="Jaillon O."/>
            <person name="Friedlander L."/>
            <person name="Samson G."/>
            <person name="Brottier P."/>
            <person name="Cure S."/>
            <person name="Segurens B."/>
            <person name="Aniere F."/>
            <person name="Samain S."/>
            <person name="Crespeau H."/>
            <person name="Abbasi N."/>
            <person name="Aiach N."/>
            <person name="Boscus D."/>
            <person name="Dickhoff R."/>
            <person name="Dors M."/>
            <person name="Dubois I."/>
            <person name="Friedman C."/>
            <person name="Gouyvenoux M."/>
            <person name="James R."/>
            <person name="Madan A."/>
            <person name="Mairey-Estrada B."/>
            <person name="Mangenot S."/>
            <person name="Martins N."/>
            <person name="Menard M."/>
            <person name="Oztas S."/>
            <person name="Ratcliffe A."/>
            <person name="Shaffer T."/>
            <person name="Trask B."/>
            <person name="Vacherie B."/>
            <person name="Bellemere C."/>
            <person name="Belser C."/>
            <person name="Besnard-Gonnet M."/>
            <person name="Bartol-Mavel D."/>
            <person name="Boutard M."/>
            <person name="Briez-Silla S."/>
            <person name="Combette S."/>
            <person name="Dufosse-Laurent V."/>
            <person name="Ferron C."/>
            <person name="Lechaplais C."/>
            <person name="Louesse C."/>
            <person name="Muselet D."/>
            <person name="Magdelenat G."/>
            <person name="Pateau E."/>
            <person name="Petit E."/>
            <person name="Sirvain-Trukniewicz P."/>
            <person name="Trybou A."/>
            <person name="Vega-Czarny N."/>
            <person name="Bataille E."/>
            <person name="Bluet E."/>
            <person name="Bordelais I."/>
            <person name="Dubois M."/>
            <person name="Dumont C."/>
            <person name="Guerin T."/>
            <person name="Haffray S."/>
            <person name="Hammadi R."/>
            <person name="Muanga J."/>
            <person name="Pellouin V."/>
            <person name="Robert D."/>
            <person name="Wunderle E."/>
            <person name="Gauguet G."/>
            <person name="Roy A."/>
            <person name="Sainte-Marthe L."/>
            <person name="Verdier J."/>
            <person name="Verdier-Discala C."/>
            <person name="Hillier L.W."/>
            <person name="Fulton L."/>
            <person name="McPherson J."/>
            <person name="Matsuda F."/>
            <person name="Wilson R."/>
            <person name="Scarpelli C."/>
            <person name="Gyapay G."/>
            <person name="Wincker P."/>
            <person name="Saurin W."/>
            <person name="Quetier F."/>
            <person name="Waterston R."/>
            <person name="Hood L."/>
            <person name="Weissenbach J."/>
        </authorList>
    </citation>
    <scope>NUCLEOTIDE SEQUENCE [LARGE SCALE GENOMIC DNA] (IMGT ALLELE TRAV3*01)</scope>
</reference>
<reference key="2">
    <citation type="book" date="2001" name="The T Cell Receptor FactsBook.">
        <title>The T Cell Receptor FactsBook.</title>
        <editorList>
            <person name="Lefranc M.P."/>
            <person name="Lefranc G."/>
        </editorList>
        <authorList>
            <person name="Lefranc M.P."/>
            <person name="Lefranc G."/>
        </authorList>
    </citation>
    <scope>NOMENCLATURE</scope>
</reference>
<reference key="3">
    <citation type="journal article" date="2004" name="Nat. Rev. Immunol.">
        <title>The many important facets of T-cell repertoire diversity.</title>
        <authorList>
            <person name="Nikolich-Zugich J."/>
            <person name="Slifka M.K."/>
            <person name="Messaoudi I."/>
        </authorList>
    </citation>
    <scope>REVIEW ON T CELL REPERTOIRE DIVERSITY</scope>
</reference>
<reference key="4">
    <citation type="journal article" date="2010" name="Cold Spring Harb. Perspect. Biol.">
        <title>Structural biology of the T-cell receptor: insights into receptor assembly, ligand recognition, and initiation of signaling.</title>
        <authorList>
            <person name="Wucherpfennig K.W."/>
            <person name="Gagnon E."/>
            <person name="Call M.J."/>
            <person name="Huseby E.S."/>
            <person name="Call M.E."/>
        </authorList>
    </citation>
    <scope>REVIEW ON T CELL RECEPTOR-CD3 COMPLEX ASSEMBLY</scope>
    <scope>SUBCELLULAR LOCATION</scope>
</reference>
<reference key="5">
    <citation type="journal article" date="2013" name="Nat. Rev. Immunol.">
        <title>T cell receptor signalling networks: branched, diversified and bounded.</title>
        <authorList>
            <person name="Brownlie R.J."/>
            <person name="Zamoyska R."/>
        </authorList>
    </citation>
    <scope>REVIEW ON T CELL RECEPTOR SIGNALING</scope>
</reference>
<reference key="6">
    <citation type="journal article" date="2014" name="Front. Immunol.">
        <title>Immunoglobulin and T Cell Receptor Genes: IMGT((R)) and the Birth and Rise of Immunoinformatics.</title>
        <authorList>
            <person name="Lefranc M.P."/>
        </authorList>
    </citation>
    <scope>NOMENCLATURE</scope>
</reference>
<reference key="7">
    <citation type="journal article" date="2015" name="Annu. Rev. Immunol.">
        <title>T cell antigen receptor recognition of antigen-presenting molecules.</title>
        <authorList>
            <person name="Rossjohn J."/>
            <person name="Gras S."/>
            <person name="Miles J.J."/>
            <person name="Turner S.J."/>
            <person name="Godfrey D.I."/>
            <person name="McCluskey J."/>
        </authorList>
    </citation>
    <scope>REVIEW ON FUNCTION</scope>
</reference>
<dbReference type="EMBL" id="AC243972">
    <property type="status" value="NOT_ANNOTATED_CDS"/>
    <property type="molecule type" value="Genomic_DNA"/>
</dbReference>
<dbReference type="SMR" id="A0A0B4J244"/>
<dbReference type="FunCoup" id="A0A0B4J244">
    <property type="interactions" value="319"/>
</dbReference>
<dbReference type="IMGT_GENE-DB" id="TRAV3"/>
<dbReference type="GlyCosmos" id="A0A0B4J244">
    <property type="glycosylation" value="1 site, No reported glycans"/>
</dbReference>
<dbReference type="GlyGen" id="A0A0B4J244">
    <property type="glycosylation" value="1 site"/>
</dbReference>
<dbReference type="BioMuta" id="TRAV3"/>
<dbReference type="Ensembl" id="ENST00000390425.2">
    <property type="protein sequence ID" value="ENSP00000444955.1"/>
    <property type="gene ID" value="ENSG00000211777.2"/>
</dbReference>
<dbReference type="AGR" id="HGNC:12128"/>
<dbReference type="GeneCards" id="TRAV3"/>
<dbReference type="HGNC" id="HGNC:12128">
    <property type="gene designation" value="TRAV3"/>
</dbReference>
<dbReference type="HPA" id="ENSG00000211777">
    <property type="expression patterns" value="Tissue enriched (lymphoid)"/>
</dbReference>
<dbReference type="neXtProt" id="NX_A0A0B4J244"/>
<dbReference type="VEuPathDB" id="HostDB:ENSG00000211777"/>
<dbReference type="GeneTree" id="ENSGT00940000153073"/>
<dbReference type="HOGENOM" id="CLU_077975_8_0_1"/>
<dbReference type="InParanoid" id="A0A0B4J244"/>
<dbReference type="OMA" id="VQHRNQG"/>
<dbReference type="OrthoDB" id="8947657at2759"/>
<dbReference type="PAN-GO" id="A0A0B4J244">
    <property type="GO annotations" value="0 GO annotations based on evolutionary models"/>
</dbReference>
<dbReference type="PhylomeDB" id="A0A0B4J244"/>
<dbReference type="SignaLink" id="A0A0B4J244"/>
<dbReference type="ChiTaRS" id="TRAV3">
    <property type="organism name" value="human"/>
</dbReference>
<dbReference type="Pharos" id="A0A0B4J244">
    <property type="development level" value="Tdark"/>
</dbReference>
<dbReference type="PRO" id="PR:A0A0B4J244"/>
<dbReference type="Proteomes" id="UP000005640">
    <property type="component" value="Chromosome 14"/>
</dbReference>
<dbReference type="RNAct" id="A0A0B4J244">
    <property type="molecule type" value="protein"/>
</dbReference>
<dbReference type="Bgee" id="ENSG00000211777">
    <property type="expression patterns" value="Expressed in male germ line stem cell (sensu Vertebrata) in testis and 61 other cell types or tissues"/>
</dbReference>
<dbReference type="GO" id="GO:0042101">
    <property type="term" value="C:T cell receptor complex"/>
    <property type="evidence" value="ECO:0007669"/>
    <property type="project" value="UniProtKB-KW"/>
</dbReference>
<dbReference type="GO" id="GO:0002250">
    <property type="term" value="P:adaptive immune response"/>
    <property type="evidence" value="ECO:0007669"/>
    <property type="project" value="UniProtKB-KW"/>
</dbReference>
<dbReference type="Gene3D" id="2.60.40.10">
    <property type="entry name" value="Immunoglobulins"/>
    <property type="match status" value="1"/>
</dbReference>
<dbReference type="InterPro" id="IPR007110">
    <property type="entry name" value="Ig-like_dom"/>
</dbReference>
<dbReference type="InterPro" id="IPR036179">
    <property type="entry name" value="Ig-like_dom_sf"/>
</dbReference>
<dbReference type="InterPro" id="IPR013783">
    <property type="entry name" value="Ig-like_fold"/>
</dbReference>
<dbReference type="InterPro" id="IPR013106">
    <property type="entry name" value="Ig_V-set"/>
</dbReference>
<dbReference type="InterPro" id="IPR051287">
    <property type="entry name" value="TCR_variable_region"/>
</dbReference>
<dbReference type="PANTHER" id="PTHR19367:SF8">
    <property type="entry name" value="T CELL RECEPTOR ALPHA VARIABLE 3"/>
    <property type="match status" value="1"/>
</dbReference>
<dbReference type="PANTHER" id="PTHR19367">
    <property type="entry name" value="T-CELL RECEPTOR ALPHA CHAIN V REGION"/>
    <property type="match status" value="1"/>
</dbReference>
<dbReference type="Pfam" id="PF07686">
    <property type="entry name" value="V-set"/>
    <property type="match status" value="1"/>
</dbReference>
<dbReference type="SMART" id="SM00406">
    <property type="entry name" value="IGv"/>
    <property type="match status" value="1"/>
</dbReference>
<dbReference type="SUPFAM" id="SSF48726">
    <property type="entry name" value="Immunoglobulin"/>
    <property type="match status" value="1"/>
</dbReference>
<dbReference type="PROSITE" id="PS50835">
    <property type="entry name" value="IG_LIKE"/>
    <property type="match status" value="1"/>
</dbReference>
<proteinExistence type="inferred from homology"/>